<keyword id="KW-0131">Cell cycle</keyword>
<keyword id="KW-0132">Cell division</keyword>
<keyword id="KW-0963">Cytoplasm</keyword>
<keyword id="KW-0206">Cytoskeleton</keyword>
<keyword id="KW-0493">Microtubule</keyword>
<keyword id="KW-0498">Mitosis</keyword>
<keyword id="KW-0597">Phosphoprotein</keyword>
<keyword id="KW-1185">Reference proteome</keyword>
<keyword id="KW-0832">Ubl conjugation</keyword>
<organism>
    <name type="scientific">Bos taurus</name>
    <name type="common">Bovine</name>
    <dbReference type="NCBI Taxonomy" id="9913"/>
    <lineage>
        <taxon>Eukaryota</taxon>
        <taxon>Metazoa</taxon>
        <taxon>Chordata</taxon>
        <taxon>Craniata</taxon>
        <taxon>Vertebrata</taxon>
        <taxon>Euteleostomi</taxon>
        <taxon>Mammalia</taxon>
        <taxon>Eutheria</taxon>
        <taxon>Laurasiatheria</taxon>
        <taxon>Artiodactyla</taxon>
        <taxon>Ruminantia</taxon>
        <taxon>Pecora</taxon>
        <taxon>Bovidae</taxon>
        <taxon>Bovinae</taxon>
        <taxon>Bos</taxon>
    </lineage>
</organism>
<dbReference type="EMBL" id="BC102764">
    <property type="protein sequence ID" value="AAI02765.1"/>
    <property type="molecule type" value="mRNA"/>
</dbReference>
<dbReference type="RefSeq" id="NP_001029546.1">
    <property type="nucleotide sequence ID" value="NM_001034374.2"/>
</dbReference>
<dbReference type="SMR" id="Q3SZP2"/>
<dbReference type="FunCoup" id="Q3SZP2">
    <property type="interactions" value="2389"/>
</dbReference>
<dbReference type="STRING" id="9913.ENSBTAP00000009897"/>
<dbReference type="iPTMnet" id="Q3SZP2"/>
<dbReference type="PaxDb" id="9913-ENSBTAP00000009897"/>
<dbReference type="GeneID" id="510159"/>
<dbReference type="KEGG" id="bta:510159"/>
<dbReference type="CTD" id="10982"/>
<dbReference type="VEuPathDB" id="HostDB:ENSBTAG00000007520"/>
<dbReference type="eggNOG" id="KOG3000">
    <property type="taxonomic scope" value="Eukaryota"/>
</dbReference>
<dbReference type="HOGENOM" id="CLU_041744_1_0_1"/>
<dbReference type="InParanoid" id="Q3SZP2"/>
<dbReference type="OMA" id="WIKRFWD"/>
<dbReference type="OrthoDB" id="2119228at2759"/>
<dbReference type="TreeFam" id="TF313620"/>
<dbReference type="Proteomes" id="UP000009136">
    <property type="component" value="Chromosome 24"/>
</dbReference>
<dbReference type="Bgee" id="ENSBTAG00000007520">
    <property type="expression patterns" value="Expressed in prefrontal cortex and 103 other cell types or tissues"/>
</dbReference>
<dbReference type="GO" id="GO:0005881">
    <property type="term" value="C:cytoplasmic microtubule"/>
    <property type="evidence" value="ECO:0000318"/>
    <property type="project" value="GO_Central"/>
</dbReference>
<dbReference type="GO" id="GO:0005815">
    <property type="term" value="C:microtubule organizing center"/>
    <property type="evidence" value="ECO:0000318"/>
    <property type="project" value="GO_Central"/>
</dbReference>
<dbReference type="GO" id="GO:0035371">
    <property type="term" value="C:microtubule plus-end"/>
    <property type="evidence" value="ECO:0000318"/>
    <property type="project" value="GO_Central"/>
</dbReference>
<dbReference type="GO" id="GO:0051233">
    <property type="term" value="C:spindle midzone"/>
    <property type="evidence" value="ECO:0000318"/>
    <property type="project" value="GO_Central"/>
</dbReference>
<dbReference type="GO" id="GO:0051010">
    <property type="term" value="F:microtubule plus-end binding"/>
    <property type="evidence" value="ECO:0000318"/>
    <property type="project" value="GO_Central"/>
</dbReference>
<dbReference type="GO" id="GO:0051301">
    <property type="term" value="P:cell division"/>
    <property type="evidence" value="ECO:0007669"/>
    <property type="project" value="UniProtKB-KW"/>
</dbReference>
<dbReference type="GO" id="GO:0035372">
    <property type="term" value="P:protein localization to microtubule"/>
    <property type="evidence" value="ECO:0000318"/>
    <property type="project" value="GO_Central"/>
</dbReference>
<dbReference type="GO" id="GO:0031110">
    <property type="term" value="P:regulation of microtubule polymerization or depolymerization"/>
    <property type="evidence" value="ECO:0000318"/>
    <property type="project" value="GO_Central"/>
</dbReference>
<dbReference type="GO" id="GO:0051225">
    <property type="term" value="P:spindle assembly"/>
    <property type="evidence" value="ECO:0000318"/>
    <property type="project" value="GO_Central"/>
</dbReference>
<dbReference type="FunFam" id="1.20.5.1430:FF:000002">
    <property type="entry name" value="microtubule-associated protein RP/EB family member 2 isoform X1"/>
    <property type="match status" value="1"/>
</dbReference>
<dbReference type="FunFam" id="1.10.418.10:FF:000007">
    <property type="entry name" value="Microtubule-associated protein, RP/EB family, member 2"/>
    <property type="match status" value="1"/>
</dbReference>
<dbReference type="Gene3D" id="1.20.5.1430">
    <property type="match status" value="1"/>
</dbReference>
<dbReference type="Gene3D" id="1.10.418.10">
    <property type="entry name" value="Calponin-like domain"/>
    <property type="match status" value="1"/>
</dbReference>
<dbReference type="InterPro" id="IPR001715">
    <property type="entry name" value="CH_dom"/>
</dbReference>
<dbReference type="InterPro" id="IPR036872">
    <property type="entry name" value="CH_dom_sf"/>
</dbReference>
<dbReference type="InterPro" id="IPR004953">
    <property type="entry name" value="EB1_C"/>
</dbReference>
<dbReference type="InterPro" id="IPR036133">
    <property type="entry name" value="EB1_C_sf"/>
</dbReference>
<dbReference type="InterPro" id="IPR027328">
    <property type="entry name" value="MAPRE"/>
</dbReference>
<dbReference type="PANTHER" id="PTHR10623">
    <property type="entry name" value="MICROTUBULE-ASSOCIATED PROTEIN RP/EB FAMILY MEMBER"/>
    <property type="match status" value="1"/>
</dbReference>
<dbReference type="Pfam" id="PF00307">
    <property type="entry name" value="CH"/>
    <property type="match status" value="1"/>
</dbReference>
<dbReference type="Pfam" id="PF03271">
    <property type="entry name" value="EB1"/>
    <property type="match status" value="1"/>
</dbReference>
<dbReference type="SUPFAM" id="SSF47576">
    <property type="entry name" value="Calponin-homology domain, CH-domain"/>
    <property type="match status" value="1"/>
</dbReference>
<dbReference type="SUPFAM" id="SSF140612">
    <property type="entry name" value="EB1 dimerisation domain-like"/>
    <property type="match status" value="1"/>
</dbReference>
<dbReference type="PROSITE" id="PS50021">
    <property type="entry name" value="CH"/>
    <property type="match status" value="1"/>
</dbReference>
<dbReference type="PROSITE" id="PS51230">
    <property type="entry name" value="EB1_C"/>
    <property type="match status" value="1"/>
</dbReference>
<accession>Q3SZP2</accession>
<proteinExistence type="evidence at transcript level"/>
<feature type="chain" id="PRO_0000240310" description="Microtubule-associated protein RP/EB family member 2">
    <location>
        <begin position="1"/>
        <end position="326"/>
    </location>
</feature>
<feature type="domain" description="Calponin-homology (CH)" evidence="4">
    <location>
        <begin position="56"/>
        <end position="158"/>
    </location>
</feature>
<feature type="domain" description="EB1 C-terminal" evidence="5">
    <location>
        <begin position="235"/>
        <end position="305"/>
    </location>
</feature>
<feature type="region of interest" description="Disordered" evidence="6">
    <location>
        <begin position="170"/>
        <end position="239"/>
    </location>
</feature>
<feature type="region of interest" description="DCTN1-binding" evidence="1">
    <location>
        <begin position="186"/>
        <end position="326"/>
    </location>
</feature>
<feature type="region of interest" description="APC-binding" evidence="1">
    <location>
        <begin position="258"/>
        <end position="301"/>
    </location>
</feature>
<feature type="region of interest" description="Disordered" evidence="6">
    <location>
        <begin position="298"/>
        <end position="326"/>
    </location>
</feature>
<feature type="compositionally biased region" description="Low complexity" evidence="6">
    <location>
        <begin position="199"/>
        <end position="233"/>
    </location>
</feature>
<feature type="compositionally biased region" description="Basic and acidic residues" evidence="6">
    <location>
        <begin position="299"/>
        <end position="316"/>
    </location>
</feature>
<feature type="compositionally biased region" description="Low complexity" evidence="6">
    <location>
        <begin position="317"/>
        <end position="326"/>
    </location>
</feature>
<feature type="modified residue" description="Phosphoserine" evidence="2">
    <location>
        <position position="9"/>
    </location>
</feature>
<feature type="modified residue" description="Phosphotyrosine" evidence="2">
    <location>
        <position position="166"/>
    </location>
</feature>
<feature type="modified residue" description="Phosphoserine" evidence="2">
    <location>
        <position position="218"/>
    </location>
</feature>
<feature type="modified residue" description="Phosphoserine" evidence="2">
    <location>
        <position position="235"/>
    </location>
</feature>
<gene>
    <name type="primary">MAPRE2</name>
</gene>
<name>MARE2_BOVIN</name>
<protein>
    <recommendedName>
        <fullName>Microtubule-associated protein RP/EB family member 2</fullName>
    </recommendedName>
</protein>
<sequence length="326" mass="36988">MPGPTQTLSPNGENNNDIIQDNGTIIPFRKHTVRGERSYSWGMAVNVYSTSITQETMSRHDIIAWVNDIVSLNYTKVEQLCSGAAYCQFMDMLFPGCISLKKVKFQAKLEHEYIHNFKLLQASFKRMNVDKVIPVEKLVKGRFQDNLDFIQWFKKFYDANYDGKEYDPVEARQGQDAIPPPDPGEQIFNLPKKSHHANSPTAGAAKSSPASKPGSTPSRPSSAKRASSSGSASRSDKDLETQVIQLNEQVHSLKLALEGVEKERDFYFGKLREIELLCQEHGQENDDLVQRLMDVLYASDEHEGHPEEPEAEEQVHEQQPQQQEEY</sequence>
<comment type="function">
    <text evidence="2">Adapter protein that is involved in microtubule polymerization, and spindle function by stabilizing microtubules and anchoring them at centrosomes. Therefore, ensures mitotic progression and genome stability (By similarity). Acts as a central regulator of microtubule reorganization in apico-basal epithelial differentiation (By similarity). Plays a role during oocyte meiosis by regulating microtubule dynamics (By similarity). Participates in neurite growth by interacting with plexin B3/PLXNB3 and microtubule reorganization during apico-basal epithelial differentiation. Also plays an essential role for cell migration and focal adhesion dynamics. Mechanistically, recruits HAX1 to microtubules in order to regulate focal adhesion dynamics (By similarity).</text>
</comment>
<comment type="subunit">
    <text evidence="2">Interacts with DCTN1. Interacts with APC (via C-terminal). Interacts with monomeric and polymerized tubulin. Interacts with SLAIN1. Interacts (via the N-terminal region) with BAG1 (By similarity). Interacts with ASB14 (By similarity). Interacts with HAX1; this interaction is essential for epidermal cell migration (By similarity).</text>
</comment>
<comment type="subcellular location">
    <subcellularLocation>
        <location evidence="1">Cytoplasm</location>
    </subcellularLocation>
    <subcellularLocation>
        <location evidence="1">Cytoplasm</location>
        <location evidence="1">Cytoskeleton</location>
    </subcellularLocation>
    <text evidence="1">Associated with the microtubule network. Accumulates at the plus end of microtubules (By similarity).</text>
</comment>
<comment type="domain">
    <text evidence="1">Composed of two functionally independent domains. The N-terminal domain forms a hydrophobic cleft involved in microtubule binding and the C-terminal is involved in the formation of mutually exclusive complexes with APC and DCTN1 (By similarity).</text>
</comment>
<comment type="PTM">
    <text evidence="2">Phosphorylated at Ser-235 by CK2 leading to enhanced cell adhesion. Phosphorylated by CDK1 and AURKB during mitosis reduces the binding affinity of MAPRE2 for microtubules.</text>
</comment>
<comment type="PTM">
    <text evidence="3">Ubiquitinated in an ASB14-dependent manner; leading to proteasomal degradation.</text>
</comment>
<comment type="similarity">
    <text evidence="7">Belongs to the MAPRE family.</text>
</comment>
<evidence type="ECO:0000250" key="1"/>
<evidence type="ECO:0000250" key="2">
    <source>
        <dbReference type="UniProtKB" id="Q15555"/>
    </source>
</evidence>
<evidence type="ECO:0000250" key="3">
    <source>
        <dbReference type="UniProtKB" id="Q8R001"/>
    </source>
</evidence>
<evidence type="ECO:0000255" key="4">
    <source>
        <dbReference type="PROSITE-ProRule" id="PRU00044"/>
    </source>
</evidence>
<evidence type="ECO:0000255" key="5">
    <source>
        <dbReference type="PROSITE-ProRule" id="PRU00576"/>
    </source>
</evidence>
<evidence type="ECO:0000256" key="6">
    <source>
        <dbReference type="SAM" id="MobiDB-lite"/>
    </source>
</evidence>
<evidence type="ECO:0000305" key="7"/>
<reference key="1">
    <citation type="submission" date="2005-08" db="EMBL/GenBank/DDBJ databases">
        <authorList>
            <consortium name="NIH - Mammalian Gene Collection (MGC) project"/>
        </authorList>
    </citation>
    <scope>NUCLEOTIDE SEQUENCE [LARGE SCALE MRNA]</scope>
    <source>
        <strain>Crossbred X Angus</strain>
        <tissue>Ileum</tissue>
    </source>
</reference>